<proteinExistence type="inferred from homology"/>
<evidence type="ECO:0000255" key="1">
    <source>
        <dbReference type="HAMAP-Rule" id="MF_01310"/>
    </source>
</evidence>
<evidence type="ECO:0000305" key="2"/>
<sequence length="129" mass="13835">MAKTPTRARKRVKKQVSDGIAHVHASFNNTIVTITDRQGNALSWATSGGSGFRGSRKSTPFAAQVAAERAGEIAKEYGVKNLEVMVKGPGPGRESSIRALNAAGFRITNITDVTPIPHNGCRPPKKRRV</sequence>
<name>RS11_AERHH</name>
<organism>
    <name type="scientific">Aeromonas hydrophila subsp. hydrophila (strain ATCC 7966 / DSM 30187 / BCRC 13018 / CCUG 14551 / JCM 1027 / KCTC 2358 / NCIMB 9240 / NCTC 8049)</name>
    <dbReference type="NCBI Taxonomy" id="380703"/>
    <lineage>
        <taxon>Bacteria</taxon>
        <taxon>Pseudomonadati</taxon>
        <taxon>Pseudomonadota</taxon>
        <taxon>Gammaproteobacteria</taxon>
        <taxon>Aeromonadales</taxon>
        <taxon>Aeromonadaceae</taxon>
        <taxon>Aeromonas</taxon>
    </lineage>
</organism>
<gene>
    <name evidence="1" type="primary">rpsK</name>
    <name type="ordered locus">AHA_0331</name>
</gene>
<accession>A0KF43</accession>
<comment type="function">
    <text evidence="1">Located on the platform of the 30S subunit, it bridges several disparate RNA helices of the 16S rRNA. Forms part of the Shine-Dalgarno cleft in the 70S ribosome.</text>
</comment>
<comment type="subunit">
    <text evidence="1">Part of the 30S ribosomal subunit. Interacts with proteins S7 and S18. Binds to IF-3.</text>
</comment>
<comment type="similarity">
    <text evidence="1">Belongs to the universal ribosomal protein uS11 family.</text>
</comment>
<protein>
    <recommendedName>
        <fullName evidence="1">Small ribosomal subunit protein uS11</fullName>
    </recommendedName>
    <alternativeName>
        <fullName evidence="2">30S ribosomal protein S11</fullName>
    </alternativeName>
</protein>
<dbReference type="EMBL" id="CP000462">
    <property type="protein sequence ID" value="ABK38687.1"/>
    <property type="molecule type" value="Genomic_DNA"/>
</dbReference>
<dbReference type="RefSeq" id="WP_005319702.1">
    <property type="nucleotide sequence ID" value="NC_008570.1"/>
</dbReference>
<dbReference type="RefSeq" id="YP_854865.1">
    <property type="nucleotide sequence ID" value="NC_008570.1"/>
</dbReference>
<dbReference type="SMR" id="A0KF43"/>
<dbReference type="STRING" id="380703.AHA_0331"/>
<dbReference type="EnsemblBacteria" id="ABK38687">
    <property type="protein sequence ID" value="ABK38687"/>
    <property type="gene ID" value="AHA_0331"/>
</dbReference>
<dbReference type="GeneID" id="97858415"/>
<dbReference type="KEGG" id="aha:AHA_0331"/>
<dbReference type="PATRIC" id="fig|380703.7.peg.321"/>
<dbReference type="eggNOG" id="COG0100">
    <property type="taxonomic scope" value="Bacteria"/>
</dbReference>
<dbReference type="HOGENOM" id="CLU_072439_5_0_6"/>
<dbReference type="OrthoDB" id="9806415at2"/>
<dbReference type="PRO" id="PR:A0KF43"/>
<dbReference type="Proteomes" id="UP000000756">
    <property type="component" value="Chromosome"/>
</dbReference>
<dbReference type="GO" id="GO:1990904">
    <property type="term" value="C:ribonucleoprotein complex"/>
    <property type="evidence" value="ECO:0007669"/>
    <property type="project" value="UniProtKB-KW"/>
</dbReference>
<dbReference type="GO" id="GO:0005840">
    <property type="term" value="C:ribosome"/>
    <property type="evidence" value="ECO:0007669"/>
    <property type="project" value="UniProtKB-KW"/>
</dbReference>
<dbReference type="GO" id="GO:0019843">
    <property type="term" value="F:rRNA binding"/>
    <property type="evidence" value="ECO:0007669"/>
    <property type="project" value="UniProtKB-UniRule"/>
</dbReference>
<dbReference type="GO" id="GO:0003735">
    <property type="term" value="F:structural constituent of ribosome"/>
    <property type="evidence" value="ECO:0007669"/>
    <property type="project" value="InterPro"/>
</dbReference>
<dbReference type="GO" id="GO:0006412">
    <property type="term" value="P:translation"/>
    <property type="evidence" value="ECO:0007669"/>
    <property type="project" value="UniProtKB-UniRule"/>
</dbReference>
<dbReference type="FunFam" id="3.30.420.80:FF:000001">
    <property type="entry name" value="30S ribosomal protein S11"/>
    <property type="match status" value="1"/>
</dbReference>
<dbReference type="Gene3D" id="3.30.420.80">
    <property type="entry name" value="Ribosomal protein S11"/>
    <property type="match status" value="1"/>
</dbReference>
<dbReference type="HAMAP" id="MF_01310">
    <property type="entry name" value="Ribosomal_uS11"/>
    <property type="match status" value="1"/>
</dbReference>
<dbReference type="InterPro" id="IPR001971">
    <property type="entry name" value="Ribosomal_uS11"/>
</dbReference>
<dbReference type="InterPro" id="IPR019981">
    <property type="entry name" value="Ribosomal_uS11_bac-type"/>
</dbReference>
<dbReference type="InterPro" id="IPR018102">
    <property type="entry name" value="Ribosomal_uS11_CS"/>
</dbReference>
<dbReference type="InterPro" id="IPR036967">
    <property type="entry name" value="Ribosomal_uS11_sf"/>
</dbReference>
<dbReference type="NCBIfam" id="NF003698">
    <property type="entry name" value="PRK05309.1"/>
    <property type="match status" value="1"/>
</dbReference>
<dbReference type="NCBIfam" id="TIGR03632">
    <property type="entry name" value="uS11_bact"/>
    <property type="match status" value="1"/>
</dbReference>
<dbReference type="PANTHER" id="PTHR11759">
    <property type="entry name" value="40S RIBOSOMAL PROTEIN S14/30S RIBOSOMAL PROTEIN S11"/>
    <property type="match status" value="1"/>
</dbReference>
<dbReference type="Pfam" id="PF00411">
    <property type="entry name" value="Ribosomal_S11"/>
    <property type="match status" value="1"/>
</dbReference>
<dbReference type="PIRSF" id="PIRSF002131">
    <property type="entry name" value="Ribosomal_S11"/>
    <property type="match status" value="1"/>
</dbReference>
<dbReference type="SUPFAM" id="SSF53137">
    <property type="entry name" value="Translational machinery components"/>
    <property type="match status" value="1"/>
</dbReference>
<dbReference type="PROSITE" id="PS00054">
    <property type="entry name" value="RIBOSOMAL_S11"/>
    <property type="match status" value="1"/>
</dbReference>
<reference key="1">
    <citation type="journal article" date="2006" name="J. Bacteriol.">
        <title>Genome sequence of Aeromonas hydrophila ATCC 7966T: jack of all trades.</title>
        <authorList>
            <person name="Seshadri R."/>
            <person name="Joseph S.W."/>
            <person name="Chopra A.K."/>
            <person name="Sha J."/>
            <person name="Shaw J."/>
            <person name="Graf J."/>
            <person name="Haft D.H."/>
            <person name="Wu M."/>
            <person name="Ren Q."/>
            <person name="Rosovitz M.J."/>
            <person name="Madupu R."/>
            <person name="Tallon L."/>
            <person name="Kim M."/>
            <person name="Jin S."/>
            <person name="Vuong H."/>
            <person name="Stine O.C."/>
            <person name="Ali A."/>
            <person name="Horneman A.J."/>
            <person name="Heidelberg J.F."/>
        </authorList>
    </citation>
    <scope>NUCLEOTIDE SEQUENCE [LARGE SCALE GENOMIC DNA]</scope>
    <source>
        <strain>ATCC 7966 / DSM 30187 / BCRC 13018 / CCUG 14551 / JCM 1027 / KCTC 2358 / NCIMB 9240 / NCTC 8049</strain>
    </source>
</reference>
<feature type="chain" id="PRO_0000294707" description="Small ribosomal subunit protein uS11">
    <location>
        <begin position="1"/>
        <end position="129"/>
    </location>
</feature>
<keyword id="KW-1185">Reference proteome</keyword>
<keyword id="KW-0687">Ribonucleoprotein</keyword>
<keyword id="KW-0689">Ribosomal protein</keyword>
<keyword id="KW-0694">RNA-binding</keyword>
<keyword id="KW-0699">rRNA-binding</keyword>